<gene>
    <name evidence="1" type="primary">ubiG</name>
    <name type="ordered locus">Bcep18194_A4151</name>
</gene>
<reference key="1">
    <citation type="submission" date="2005-10" db="EMBL/GenBank/DDBJ databases">
        <title>Complete sequence of chromosome 1 of Burkholderia sp. 383.</title>
        <authorList>
            <consortium name="US DOE Joint Genome Institute"/>
            <person name="Copeland A."/>
            <person name="Lucas S."/>
            <person name="Lapidus A."/>
            <person name="Barry K."/>
            <person name="Detter J.C."/>
            <person name="Glavina T."/>
            <person name="Hammon N."/>
            <person name="Israni S."/>
            <person name="Pitluck S."/>
            <person name="Chain P."/>
            <person name="Malfatti S."/>
            <person name="Shin M."/>
            <person name="Vergez L."/>
            <person name="Schmutz J."/>
            <person name="Larimer F."/>
            <person name="Land M."/>
            <person name="Kyrpides N."/>
            <person name="Lykidis A."/>
            <person name="Richardson P."/>
        </authorList>
    </citation>
    <scope>NUCLEOTIDE SEQUENCE [LARGE SCALE GENOMIC DNA]</scope>
    <source>
        <strain>ATCC 17760 / DSM 23089 / LMG 22485 / NCIMB 9086 / R18194 / 383</strain>
    </source>
</reference>
<organism>
    <name type="scientific">Burkholderia lata (strain ATCC 17760 / DSM 23089 / LMG 22485 / NCIMB 9086 / R18194 / 383)</name>
    <dbReference type="NCBI Taxonomy" id="482957"/>
    <lineage>
        <taxon>Bacteria</taxon>
        <taxon>Pseudomonadati</taxon>
        <taxon>Pseudomonadota</taxon>
        <taxon>Betaproteobacteria</taxon>
        <taxon>Burkholderiales</taxon>
        <taxon>Burkholderiaceae</taxon>
        <taxon>Burkholderia</taxon>
        <taxon>Burkholderia cepacia complex</taxon>
    </lineage>
</organism>
<feature type="chain" id="PRO_0000241705" description="Ubiquinone biosynthesis O-methyltransferase">
    <location>
        <begin position="1"/>
        <end position="232"/>
    </location>
</feature>
<feature type="binding site" evidence="1">
    <location>
        <position position="36"/>
    </location>
    <ligand>
        <name>S-adenosyl-L-methionine</name>
        <dbReference type="ChEBI" id="CHEBI:59789"/>
    </ligand>
</feature>
<feature type="binding site" evidence="1">
    <location>
        <position position="55"/>
    </location>
    <ligand>
        <name>S-adenosyl-L-methionine</name>
        <dbReference type="ChEBI" id="CHEBI:59789"/>
    </ligand>
</feature>
<feature type="binding site" evidence="1">
    <location>
        <position position="76"/>
    </location>
    <ligand>
        <name>S-adenosyl-L-methionine</name>
        <dbReference type="ChEBI" id="CHEBI:59789"/>
    </ligand>
</feature>
<feature type="binding site" evidence="1">
    <location>
        <position position="120"/>
    </location>
    <ligand>
        <name>S-adenosyl-L-methionine</name>
        <dbReference type="ChEBI" id="CHEBI:59789"/>
    </ligand>
</feature>
<name>UBIG_BURL3</name>
<protein>
    <recommendedName>
        <fullName evidence="1">Ubiquinone biosynthesis O-methyltransferase</fullName>
    </recommendedName>
    <alternativeName>
        <fullName evidence="1">2-polyprenyl-6-hydroxyphenol methylase</fullName>
        <ecNumber evidence="1">2.1.1.222</ecNumber>
    </alternativeName>
    <alternativeName>
        <fullName evidence="1">3-demethylubiquinone 3-O-methyltransferase</fullName>
        <ecNumber evidence="1">2.1.1.64</ecNumber>
    </alternativeName>
</protein>
<dbReference type="EC" id="2.1.1.222" evidence="1"/>
<dbReference type="EC" id="2.1.1.64" evidence="1"/>
<dbReference type="EMBL" id="CP000151">
    <property type="protein sequence ID" value="ABB07748.1"/>
    <property type="molecule type" value="Genomic_DNA"/>
</dbReference>
<dbReference type="RefSeq" id="WP_011351326.1">
    <property type="nucleotide sequence ID" value="NC_007510.1"/>
</dbReference>
<dbReference type="SMR" id="Q39IG8"/>
<dbReference type="GeneID" id="45094050"/>
<dbReference type="KEGG" id="bur:Bcep18194_A4151"/>
<dbReference type="PATRIC" id="fig|482957.22.peg.1038"/>
<dbReference type="HOGENOM" id="CLU_042432_5_0_4"/>
<dbReference type="UniPathway" id="UPA00232"/>
<dbReference type="Proteomes" id="UP000002705">
    <property type="component" value="Chromosome 1"/>
</dbReference>
<dbReference type="GO" id="GO:0102208">
    <property type="term" value="F:2-polyprenyl-6-hydroxyphenol methylase activity"/>
    <property type="evidence" value="ECO:0007669"/>
    <property type="project" value="UniProtKB-EC"/>
</dbReference>
<dbReference type="GO" id="GO:0061542">
    <property type="term" value="F:3-demethylubiquinol 3-O-methyltransferase activity"/>
    <property type="evidence" value="ECO:0007669"/>
    <property type="project" value="UniProtKB-UniRule"/>
</dbReference>
<dbReference type="GO" id="GO:0010420">
    <property type="term" value="F:polyprenyldihydroxybenzoate methyltransferase activity"/>
    <property type="evidence" value="ECO:0007669"/>
    <property type="project" value="InterPro"/>
</dbReference>
<dbReference type="GO" id="GO:0032259">
    <property type="term" value="P:methylation"/>
    <property type="evidence" value="ECO:0007669"/>
    <property type="project" value="UniProtKB-KW"/>
</dbReference>
<dbReference type="CDD" id="cd02440">
    <property type="entry name" value="AdoMet_MTases"/>
    <property type="match status" value="1"/>
</dbReference>
<dbReference type="FunFam" id="3.40.50.150:FF:000028">
    <property type="entry name" value="Ubiquinone biosynthesis O-methyltransferase"/>
    <property type="match status" value="1"/>
</dbReference>
<dbReference type="Gene3D" id="3.40.50.150">
    <property type="entry name" value="Vaccinia Virus protein VP39"/>
    <property type="match status" value="1"/>
</dbReference>
<dbReference type="HAMAP" id="MF_00472">
    <property type="entry name" value="UbiG"/>
    <property type="match status" value="1"/>
</dbReference>
<dbReference type="InterPro" id="IPR029063">
    <property type="entry name" value="SAM-dependent_MTases_sf"/>
</dbReference>
<dbReference type="InterPro" id="IPR010233">
    <property type="entry name" value="UbiG_MeTrfase"/>
</dbReference>
<dbReference type="NCBIfam" id="TIGR01983">
    <property type="entry name" value="UbiG"/>
    <property type="match status" value="1"/>
</dbReference>
<dbReference type="PANTHER" id="PTHR43464">
    <property type="entry name" value="METHYLTRANSFERASE"/>
    <property type="match status" value="1"/>
</dbReference>
<dbReference type="PANTHER" id="PTHR43464:SF19">
    <property type="entry name" value="UBIQUINONE BIOSYNTHESIS O-METHYLTRANSFERASE, MITOCHONDRIAL"/>
    <property type="match status" value="1"/>
</dbReference>
<dbReference type="Pfam" id="PF13489">
    <property type="entry name" value="Methyltransf_23"/>
    <property type="match status" value="1"/>
</dbReference>
<dbReference type="SUPFAM" id="SSF53335">
    <property type="entry name" value="S-adenosyl-L-methionine-dependent methyltransferases"/>
    <property type="match status" value="1"/>
</dbReference>
<accession>Q39IG8</accession>
<evidence type="ECO:0000255" key="1">
    <source>
        <dbReference type="HAMAP-Rule" id="MF_00472"/>
    </source>
</evidence>
<proteinExistence type="inferred from homology"/>
<sequence length="232" mass="25165">MTNADPHELQKFSDLAHRWWDPNAEFKPLHDLNPVRLGWIDAHAHLAGKRALDIGCGGGILSESMAGLGAQVKGIDLSTEALGVADLHSLESGITVDYEAIAAEAIAAREPGTYDVVTCMEMLEHVPSPGDIVAACATLVKPGGWVFFSTLNRNLKAYLFAVIGAEYIAQMLPKGTHDYARFIRPSELAGFVRATDLHIVEIKGITYHPIGKRFALSNDTDINYLVACRRGA</sequence>
<comment type="function">
    <text evidence="1">O-methyltransferase that catalyzes the 2 O-methylation steps in the ubiquinone biosynthetic pathway.</text>
</comment>
<comment type="catalytic activity">
    <reaction evidence="1">
        <text>a 3-demethylubiquinol + S-adenosyl-L-methionine = a ubiquinol + S-adenosyl-L-homocysteine + H(+)</text>
        <dbReference type="Rhea" id="RHEA:44380"/>
        <dbReference type="Rhea" id="RHEA-COMP:9566"/>
        <dbReference type="Rhea" id="RHEA-COMP:10914"/>
        <dbReference type="ChEBI" id="CHEBI:15378"/>
        <dbReference type="ChEBI" id="CHEBI:17976"/>
        <dbReference type="ChEBI" id="CHEBI:57856"/>
        <dbReference type="ChEBI" id="CHEBI:59789"/>
        <dbReference type="ChEBI" id="CHEBI:84422"/>
        <dbReference type="EC" id="2.1.1.64"/>
    </reaction>
</comment>
<comment type="catalytic activity">
    <reaction evidence="1">
        <text>a 3-(all-trans-polyprenyl)benzene-1,2-diol + S-adenosyl-L-methionine = a 2-methoxy-6-(all-trans-polyprenyl)phenol + S-adenosyl-L-homocysteine + H(+)</text>
        <dbReference type="Rhea" id="RHEA:31411"/>
        <dbReference type="Rhea" id="RHEA-COMP:9550"/>
        <dbReference type="Rhea" id="RHEA-COMP:9551"/>
        <dbReference type="ChEBI" id="CHEBI:15378"/>
        <dbReference type="ChEBI" id="CHEBI:57856"/>
        <dbReference type="ChEBI" id="CHEBI:59789"/>
        <dbReference type="ChEBI" id="CHEBI:62729"/>
        <dbReference type="ChEBI" id="CHEBI:62731"/>
        <dbReference type="EC" id="2.1.1.222"/>
    </reaction>
</comment>
<comment type="pathway">
    <text evidence="1">Cofactor biosynthesis; ubiquinone biosynthesis.</text>
</comment>
<comment type="similarity">
    <text evidence="1">Belongs to the methyltransferase superfamily. UbiG/COQ3 family.</text>
</comment>
<keyword id="KW-0489">Methyltransferase</keyword>
<keyword id="KW-0949">S-adenosyl-L-methionine</keyword>
<keyword id="KW-0808">Transferase</keyword>
<keyword id="KW-0831">Ubiquinone biosynthesis</keyword>